<sequence>MAKHVAVLMGGLSAEREVSLCSGAACAEALRGEGFEVTEVDVDRQIGERLAALRPDVAFNALHGRFGEDGIIQGVLEMLAIPYTHSGVLASALAMRKDRARDVLAAAGVPIAKGVTVDRLEAAQRHILPPPYVIKPLGEGSSFGVFIVREDQAYPPQELTRSDWAFGNRVLVESYIGGRELTCAVIGEKAHDVIEIKAVGGGWYDYDAKYRKGGSIHILPAELKRNIYQNVQLLSLKAHKALGCRGVSRTDFRYDDRPEGTGELIVLEVNTQPGMTETSLLPEIAAYAGLSFGELVRWMVDDASCDR</sequence>
<name>DDL_BEII9</name>
<keyword id="KW-0067">ATP-binding</keyword>
<keyword id="KW-0133">Cell shape</keyword>
<keyword id="KW-0961">Cell wall biogenesis/degradation</keyword>
<keyword id="KW-0963">Cytoplasm</keyword>
<keyword id="KW-0436">Ligase</keyword>
<keyword id="KW-0460">Magnesium</keyword>
<keyword id="KW-0464">Manganese</keyword>
<keyword id="KW-0479">Metal-binding</keyword>
<keyword id="KW-0547">Nucleotide-binding</keyword>
<keyword id="KW-0573">Peptidoglycan synthesis</keyword>
<keyword id="KW-1185">Reference proteome</keyword>
<organism>
    <name type="scientific">Beijerinckia indica subsp. indica (strain ATCC 9039 / DSM 1715 / NCIMB 8712)</name>
    <dbReference type="NCBI Taxonomy" id="395963"/>
    <lineage>
        <taxon>Bacteria</taxon>
        <taxon>Pseudomonadati</taxon>
        <taxon>Pseudomonadota</taxon>
        <taxon>Alphaproteobacteria</taxon>
        <taxon>Hyphomicrobiales</taxon>
        <taxon>Beijerinckiaceae</taxon>
        <taxon>Beijerinckia</taxon>
    </lineage>
</organism>
<evidence type="ECO:0000250" key="1"/>
<evidence type="ECO:0000255" key="2">
    <source>
        <dbReference type="HAMAP-Rule" id="MF_00047"/>
    </source>
</evidence>
<gene>
    <name evidence="2" type="primary">ddl</name>
    <name type="ordered locus">Bind_0695</name>
</gene>
<proteinExistence type="inferred from homology"/>
<protein>
    <recommendedName>
        <fullName evidence="2">D-alanine--D-alanine ligase</fullName>
        <ecNumber evidence="2">6.3.2.4</ecNumber>
    </recommendedName>
    <alternativeName>
        <fullName evidence="2">D-Ala-D-Ala ligase</fullName>
    </alternativeName>
    <alternativeName>
        <fullName evidence="2">D-alanylalanine synthetase</fullName>
    </alternativeName>
</protein>
<reference key="1">
    <citation type="journal article" date="2010" name="J. Bacteriol.">
        <title>Complete genome sequence of Beijerinckia indica subsp. indica.</title>
        <authorList>
            <person name="Tamas I."/>
            <person name="Dedysh S.N."/>
            <person name="Liesack W."/>
            <person name="Stott M.B."/>
            <person name="Alam M."/>
            <person name="Murrell J.C."/>
            <person name="Dunfield P.F."/>
        </authorList>
    </citation>
    <scope>NUCLEOTIDE SEQUENCE [LARGE SCALE GENOMIC DNA]</scope>
    <source>
        <strain>ATCC 9039 / DSM 1715 / NCIMB 8712</strain>
    </source>
</reference>
<feature type="chain" id="PRO_1000091160" description="D-alanine--D-alanine ligase">
    <location>
        <begin position="1"/>
        <end position="307"/>
    </location>
</feature>
<feature type="domain" description="ATP-grasp" evidence="2">
    <location>
        <begin position="101"/>
        <end position="301"/>
    </location>
</feature>
<feature type="binding site" evidence="2">
    <location>
        <begin position="128"/>
        <end position="182"/>
    </location>
    <ligand>
        <name>ATP</name>
        <dbReference type="ChEBI" id="CHEBI:30616"/>
    </ligand>
</feature>
<feature type="binding site" evidence="2">
    <location>
        <position position="251"/>
    </location>
    <ligand>
        <name>Mg(2+)</name>
        <dbReference type="ChEBI" id="CHEBI:18420"/>
        <label>1</label>
    </ligand>
</feature>
<feature type="binding site" evidence="2">
    <location>
        <position position="268"/>
    </location>
    <ligand>
        <name>Mg(2+)</name>
        <dbReference type="ChEBI" id="CHEBI:18420"/>
        <label>1</label>
    </ligand>
</feature>
<feature type="binding site" evidence="2">
    <location>
        <position position="268"/>
    </location>
    <ligand>
        <name>Mg(2+)</name>
        <dbReference type="ChEBI" id="CHEBI:18420"/>
        <label>2</label>
    </ligand>
</feature>
<feature type="binding site" evidence="2">
    <location>
        <position position="270"/>
    </location>
    <ligand>
        <name>Mg(2+)</name>
        <dbReference type="ChEBI" id="CHEBI:18420"/>
        <label>2</label>
    </ligand>
</feature>
<comment type="function">
    <text evidence="2">Cell wall formation.</text>
</comment>
<comment type="catalytic activity">
    <reaction evidence="2">
        <text>2 D-alanine + ATP = D-alanyl-D-alanine + ADP + phosphate + H(+)</text>
        <dbReference type="Rhea" id="RHEA:11224"/>
        <dbReference type="ChEBI" id="CHEBI:15378"/>
        <dbReference type="ChEBI" id="CHEBI:30616"/>
        <dbReference type="ChEBI" id="CHEBI:43474"/>
        <dbReference type="ChEBI" id="CHEBI:57416"/>
        <dbReference type="ChEBI" id="CHEBI:57822"/>
        <dbReference type="ChEBI" id="CHEBI:456216"/>
        <dbReference type="EC" id="6.3.2.4"/>
    </reaction>
</comment>
<comment type="cofactor">
    <cofactor evidence="1">
        <name>Mg(2+)</name>
        <dbReference type="ChEBI" id="CHEBI:18420"/>
    </cofactor>
    <cofactor evidence="1">
        <name>Mn(2+)</name>
        <dbReference type="ChEBI" id="CHEBI:29035"/>
    </cofactor>
    <text evidence="1">Binds 2 magnesium or manganese ions per subunit.</text>
</comment>
<comment type="pathway">
    <text evidence="2">Cell wall biogenesis; peptidoglycan biosynthesis.</text>
</comment>
<comment type="subcellular location">
    <subcellularLocation>
        <location evidence="2">Cytoplasm</location>
    </subcellularLocation>
</comment>
<comment type="similarity">
    <text evidence="2">Belongs to the D-alanine--D-alanine ligase family.</text>
</comment>
<dbReference type="EC" id="6.3.2.4" evidence="2"/>
<dbReference type="EMBL" id="CP001016">
    <property type="protein sequence ID" value="ACB94345.1"/>
    <property type="molecule type" value="Genomic_DNA"/>
</dbReference>
<dbReference type="RefSeq" id="WP_012383703.1">
    <property type="nucleotide sequence ID" value="NC_010581.1"/>
</dbReference>
<dbReference type="SMR" id="B2IGG3"/>
<dbReference type="STRING" id="395963.Bind_0695"/>
<dbReference type="KEGG" id="bid:Bind_0695"/>
<dbReference type="eggNOG" id="COG1181">
    <property type="taxonomic scope" value="Bacteria"/>
</dbReference>
<dbReference type="HOGENOM" id="CLU_039268_1_1_5"/>
<dbReference type="OrthoDB" id="9813261at2"/>
<dbReference type="UniPathway" id="UPA00219"/>
<dbReference type="Proteomes" id="UP000001695">
    <property type="component" value="Chromosome"/>
</dbReference>
<dbReference type="GO" id="GO:0005737">
    <property type="term" value="C:cytoplasm"/>
    <property type="evidence" value="ECO:0007669"/>
    <property type="project" value="UniProtKB-SubCell"/>
</dbReference>
<dbReference type="GO" id="GO:0005524">
    <property type="term" value="F:ATP binding"/>
    <property type="evidence" value="ECO:0007669"/>
    <property type="project" value="UniProtKB-KW"/>
</dbReference>
<dbReference type="GO" id="GO:0008716">
    <property type="term" value="F:D-alanine-D-alanine ligase activity"/>
    <property type="evidence" value="ECO:0007669"/>
    <property type="project" value="UniProtKB-UniRule"/>
</dbReference>
<dbReference type="GO" id="GO:0046872">
    <property type="term" value="F:metal ion binding"/>
    <property type="evidence" value="ECO:0007669"/>
    <property type="project" value="UniProtKB-KW"/>
</dbReference>
<dbReference type="GO" id="GO:0071555">
    <property type="term" value="P:cell wall organization"/>
    <property type="evidence" value="ECO:0007669"/>
    <property type="project" value="UniProtKB-KW"/>
</dbReference>
<dbReference type="GO" id="GO:0009252">
    <property type="term" value="P:peptidoglycan biosynthetic process"/>
    <property type="evidence" value="ECO:0007669"/>
    <property type="project" value="UniProtKB-UniRule"/>
</dbReference>
<dbReference type="GO" id="GO:0008360">
    <property type="term" value="P:regulation of cell shape"/>
    <property type="evidence" value="ECO:0007669"/>
    <property type="project" value="UniProtKB-KW"/>
</dbReference>
<dbReference type="Gene3D" id="3.40.50.20">
    <property type="match status" value="1"/>
</dbReference>
<dbReference type="Gene3D" id="3.30.1490.20">
    <property type="entry name" value="ATP-grasp fold, A domain"/>
    <property type="match status" value="1"/>
</dbReference>
<dbReference type="Gene3D" id="3.30.470.20">
    <property type="entry name" value="ATP-grasp fold, B domain"/>
    <property type="match status" value="1"/>
</dbReference>
<dbReference type="HAMAP" id="MF_00047">
    <property type="entry name" value="Dala_Dala_lig"/>
    <property type="match status" value="1"/>
</dbReference>
<dbReference type="InterPro" id="IPR011761">
    <property type="entry name" value="ATP-grasp"/>
</dbReference>
<dbReference type="InterPro" id="IPR013815">
    <property type="entry name" value="ATP_grasp_subdomain_1"/>
</dbReference>
<dbReference type="InterPro" id="IPR000291">
    <property type="entry name" value="D-Ala_lig_Van_CS"/>
</dbReference>
<dbReference type="InterPro" id="IPR005905">
    <property type="entry name" value="D_ala_D_ala"/>
</dbReference>
<dbReference type="InterPro" id="IPR011095">
    <property type="entry name" value="Dala_Dala_lig_C"/>
</dbReference>
<dbReference type="InterPro" id="IPR011127">
    <property type="entry name" value="Dala_Dala_lig_N"/>
</dbReference>
<dbReference type="InterPro" id="IPR016185">
    <property type="entry name" value="PreATP-grasp_dom_sf"/>
</dbReference>
<dbReference type="NCBIfam" id="TIGR01205">
    <property type="entry name" value="D_ala_D_alaTIGR"/>
    <property type="match status" value="1"/>
</dbReference>
<dbReference type="NCBIfam" id="NF002378">
    <property type="entry name" value="PRK01372.1"/>
    <property type="match status" value="1"/>
</dbReference>
<dbReference type="PANTHER" id="PTHR23132">
    <property type="entry name" value="D-ALANINE--D-ALANINE LIGASE"/>
    <property type="match status" value="1"/>
</dbReference>
<dbReference type="PANTHER" id="PTHR23132:SF23">
    <property type="entry name" value="D-ALANINE--D-ALANINE LIGASE B"/>
    <property type="match status" value="1"/>
</dbReference>
<dbReference type="Pfam" id="PF07478">
    <property type="entry name" value="Dala_Dala_lig_C"/>
    <property type="match status" value="1"/>
</dbReference>
<dbReference type="Pfam" id="PF01820">
    <property type="entry name" value="Dala_Dala_lig_N"/>
    <property type="match status" value="1"/>
</dbReference>
<dbReference type="PIRSF" id="PIRSF039102">
    <property type="entry name" value="Ddl/VanB"/>
    <property type="match status" value="1"/>
</dbReference>
<dbReference type="SUPFAM" id="SSF56059">
    <property type="entry name" value="Glutathione synthetase ATP-binding domain-like"/>
    <property type="match status" value="1"/>
</dbReference>
<dbReference type="SUPFAM" id="SSF52440">
    <property type="entry name" value="PreATP-grasp domain"/>
    <property type="match status" value="1"/>
</dbReference>
<dbReference type="PROSITE" id="PS50975">
    <property type="entry name" value="ATP_GRASP"/>
    <property type="match status" value="1"/>
</dbReference>
<dbReference type="PROSITE" id="PS00843">
    <property type="entry name" value="DALA_DALA_LIGASE_1"/>
    <property type="match status" value="1"/>
</dbReference>
<dbReference type="PROSITE" id="PS00844">
    <property type="entry name" value="DALA_DALA_LIGASE_2"/>
    <property type="match status" value="1"/>
</dbReference>
<accession>B2IGG3</accession>